<reference key="1">
    <citation type="journal article" date="1990" name="Virology">
        <title>Genetic variation and multigene families in African swine fever virus.</title>
        <authorList>
            <person name="de la Vega I."/>
            <person name="Vinuela E."/>
            <person name="Blasco R."/>
        </authorList>
    </citation>
    <scope>NUCLEOTIDE SEQUENCE [GENOMIC DNA]</scope>
</reference>
<organismHost>
    <name type="scientific">Ornithodoros</name>
    <name type="common">relapsing fever ticks</name>
    <dbReference type="NCBI Taxonomy" id="6937"/>
</organismHost>
<organismHost>
    <name type="scientific">Sus scrofa</name>
    <name type="common">Pig</name>
    <dbReference type="NCBI Taxonomy" id="9823"/>
</organismHost>
<sequence length="119" mass="14307">MKLLALLCILIWLSQPGLNRPLSIFYTKQNLPRTYTPPVRELEYWCTYGKHCDFCWECRNGICKNKVWDDMPLIKQNDYISQCSIARYFDRCMYFIKPKSPYIHYMDCSQPIVYKGFSH</sequence>
<accession>P26703</accession>
<feature type="signal peptide" evidence="1">
    <location>
        <begin position="1"/>
        <end position="16"/>
    </location>
</feature>
<feature type="chain" id="PRO_0000036728" description="Protein MGF 110-13L-B">
    <location>
        <begin position="17"/>
        <end position="119"/>
    </location>
</feature>
<gene>
    <name type="ORF">LIS119-1</name>
</gene>
<proteinExistence type="inferred from homology"/>
<keyword id="KW-0244">Early protein</keyword>
<keyword id="KW-0732">Signal</keyword>
<comment type="similarity">
    <text evidence="2">Belongs to the asfivirus MGF 110 family.</text>
</comment>
<protein>
    <recommendedName>
        <fullName>Protein MGF 110-13L-B</fullName>
    </recommendedName>
</protein>
<dbReference type="EMBL" id="M58155">
    <property type="protein sequence ID" value="AAA42712.1"/>
    <property type="molecule type" value="Genomic_DNA"/>
</dbReference>
<dbReference type="PIR" id="F45348">
    <property type="entry name" value="F45348"/>
</dbReference>
<dbReference type="InterPro" id="IPR004848">
    <property type="entry name" value="ASFV_fam_110"/>
</dbReference>
<dbReference type="Pfam" id="PF01639">
    <property type="entry name" value="v110"/>
    <property type="match status" value="1"/>
</dbReference>
<evidence type="ECO:0000255" key="1"/>
<evidence type="ECO:0000305" key="2"/>
<name>1101B_ASFL5</name>
<organism>
    <name type="scientific">African swine fever virus (isolate Portugal/Lis 57/1957)</name>
    <name type="common">ASFV</name>
    <dbReference type="NCBI Taxonomy" id="10499"/>
    <lineage>
        <taxon>Viruses</taxon>
        <taxon>Varidnaviria</taxon>
        <taxon>Bamfordvirae</taxon>
        <taxon>Nucleocytoviricota</taxon>
        <taxon>Pokkesviricetes</taxon>
        <taxon>Asfuvirales</taxon>
        <taxon>Asfarviridae</taxon>
        <taxon>Asfivirus</taxon>
        <taxon>African swine fever virus</taxon>
    </lineage>
</organism>